<sequence length="365" mass="41470">MKLSDFDFDLPSELIAQYPSRERDNSDLLIAVTPPIKTKFYNIIDYLKEGDLLVFNNSKVIKAKLNLGENITINLNQKLSDDSWSAFAKPARKLHVNDEFYFDNHKVIITEKLAMGEIKVKFELNDISVFEFLNKYGEMPLPVYIRRSHSLCHPVATTTGSKTYLNNDWIPWSNHGMTNTQNDNDRYQTVYSQIEGSVAAPTAGLHFTKDILDKLKAEGIQATFLTLHVGAGTFLPVKTENIHEHKMHTEYCSITPDTAKIINKAKQEGKRIIAVGTTTLRTLESSCNNGIVKAGSFKTDIFITPGFKFQTADMLLTNFHFPKSTLFMLICAFAGFKEMHELYKYAIKEAMRFFSYGDATLLCRK</sequence>
<keyword id="KW-0963">Cytoplasm</keyword>
<keyword id="KW-0671">Queuosine biosynthesis</keyword>
<keyword id="KW-0949">S-adenosyl-L-methionine</keyword>
<keyword id="KW-0808">Transferase</keyword>
<gene>
    <name evidence="1" type="primary">queA</name>
    <name type="ordered locus">RAF_ORF0263</name>
</gene>
<accession>C3PMQ3</accession>
<proteinExistence type="inferred from homology"/>
<protein>
    <recommendedName>
        <fullName evidence="1">S-adenosylmethionine:tRNA ribosyltransferase-isomerase</fullName>
        <ecNumber evidence="1">2.4.99.17</ecNumber>
    </recommendedName>
    <alternativeName>
        <fullName evidence="1">Queuosine biosynthesis protein QueA</fullName>
    </alternativeName>
</protein>
<feature type="chain" id="PRO_1000202959" description="S-adenosylmethionine:tRNA ribosyltransferase-isomerase">
    <location>
        <begin position="1"/>
        <end position="365"/>
    </location>
</feature>
<reference key="1">
    <citation type="journal article" date="2009" name="BMC Genomics">
        <title>Analysis of the Rickettsia africae genome reveals that virulence acquisition in Rickettsia species may be explained by genome reduction.</title>
        <authorList>
            <person name="Fournier P.-E."/>
            <person name="El Karkouri K."/>
            <person name="Leroy Q."/>
            <person name="Robert C."/>
            <person name="Giumelli B."/>
            <person name="Renesto P."/>
            <person name="Socolovschi C."/>
            <person name="Parola P."/>
            <person name="Audic S."/>
            <person name="Raoult D."/>
        </authorList>
    </citation>
    <scope>NUCLEOTIDE SEQUENCE [LARGE SCALE GENOMIC DNA]</scope>
    <source>
        <strain>ESF-5</strain>
    </source>
</reference>
<dbReference type="EC" id="2.4.99.17" evidence="1"/>
<dbReference type="EMBL" id="CP001612">
    <property type="protein sequence ID" value="ACP53213.1"/>
    <property type="molecule type" value="Genomic_DNA"/>
</dbReference>
<dbReference type="RefSeq" id="WP_012719474.1">
    <property type="nucleotide sequence ID" value="NC_012633.1"/>
</dbReference>
<dbReference type="SMR" id="C3PMQ3"/>
<dbReference type="KEGG" id="raf:RAF_ORF0263"/>
<dbReference type="HOGENOM" id="CLU_039110_1_0_5"/>
<dbReference type="UniPathway" id="UPA00392"/>
<dbReference type="Proteomes" id="UP000002305">
    <property type="component" value="Chromosome"/>
</dbReference>
<dbReference type="GO" id="GO:0005737">
    <property type="term" value="C:cytoplasm"/>
    <property type="evidence" value="ECO:0007669"/>
    <property type="project" value="UniProtKB-SubCell"/>
</dbReference>
<dbReference type="GO" id="GO:0051075">
    <property type="term" value="F:S-adenosylmethionine:tRNA ribosyltransferase-isomerase activity"/>
    <property type="evidence" value="ECO:0007669"/>
    <property type="project" value="UniProtKB-EC"/>
</dbReference>
<dbReference type="GO" id="GO:0008616">
    <property type="term" value="P:queuosine biosynthetic process"/>
    <property type="evidence" value="ECO:0007669"/>
    <property type="project" value="UniProtKB-UniRule"/>
</dbReference>
<dbReference type="GO" id="GO:0002099">
    <property type="term" value="P:tRNA wobble guanine modification"/>
    <property type="evidence" value="ECO:0007669"/>
    <property type="project" value="TreeGrafter"/>
</dbReference>
<dbReference type="Gene3D" id="2.40.10.240">
    <property type="entry name" value="QueA-like"/>
    <property type="match status" value="1"/>
</dbReference>
<dbReference type="Gene3D" id="3.40.1780.10">
    <property type="entry name" value="QueA-like"/>
    <property type="match status" value="1"/>
</dbReference>
<dbReference type="HAMAP" id="MF_00113">
    <property type="entry name" value="QueA"/>
    <property type="match status" value="1"/>
</dbReference>
<dbReference type="InterPro" id="IPR003699">
    <property type="entry name" value="QueA"/>
</dbReference>
<dbReference type="InterPro" id="IPR042118">
    <property type="entry name" value="QueA_dom1"/>
</dbReference>
<dbReference type="InterPro" id="IPR042119">
    <property type="entry name" value="QueA_dom2"/>
</dbReference>
<dbReference type="InterPro" id="IPR036100">
    <property type="entry name" value="QueA_sf"/>
</dbReference>
<dbReference type="NCBIfam" id="NF002398">
    <property type="entry name" value="PRK01424.1"/>
    <property type="match status" value="1"/>
</dbReference>
<dbReference type="PANTHER" id="PTHR30307">
    <property type="entry name" value="S-ADENOSYLMETHIONINE:TRNA RIBOSYLTRANSFERASE-ISOMERASE"/>
    <property type="match status" value="1"/>
</dbReference>
<dbReference type="PANTHER" id="PTHR30307:SF0">
    <property type="entry name" value="S-ADENOSYLMETHIONINE:TRNA RIBOSYLTRANSFERASE-ISOMERASE"/>
    <property type="match status" value="1"/>
</dbReference>
<dbReference type="Pfam" id="PF02547">
    <property type="entry name" value="Queuosine_synth"/>
    <property type="match status" value="1"/>
</dbReference>
<dbReference type="SUPFAM" id="SSF111337">
    <property type="entry name" value="QueA-like"/>
    <property type="match status" value="1"/>
</dbReference>
<organism>
    <name type="scientific">Rickettsia africae (strain ESF-5)</name>
    <dbReference type="NCBI Taxonomy" id="347255"/>
    <lineage>
        <taxon>Bacteria</taxon>
        <taxon>Pseudomonadati</taxon>
        <taxon>Pseudomonadota</taxon>
        <taxon>Alphaproteobacteria</taxon>
        <taxon>Rickettsiales</taxon>
        <taxon>Rickettsiaceae</taxon>
        <taxon>Rickettsieae</taxon>
        <taxon>Rickettsia</taxon>
        <taxon>spotted fever group</taxon>
    </lineage>
</organism>
<name>QUEA_RICAE</name>
<comment type="function">
    <text evidence="1">Transfers and isomerizes the ribose moiety from AdoMet to the 7-aminomethyl group of 7-deazaguanine (preQ1-tRNA) to give epoxyqueuosine (oQ-tRNA).</text>
</comment>
<comment type="catalytic activity">
    <reaction evidence="1">
        <text>7-aminomethyl-7-carbaguanosine(34) in tRNA + S-adenosyl-L-methionine = epoxyqueuosine(34) in tRNA + adenine + L-methionine + 2 H(+)</text>
        <dbReference type="Rhea" id="RHEA:32155"/>
        <dbReference type="Rhea" id="RHEA-COMP:10342"/>
        <dbReference type="Rhea" id="RHEA-COMP:18582"/>
        <dbReference type="ChEBI" id="CHEBI:15378"/>
        <dbReference type="ChEBI" id="CHEBI:16708"/>
        <dbReference type="ChEBI" id="CHEBI:57844"/>
        <dbReference type="ChEBI" id="CHEBI:59789"/>
        <dbReference type="ChEBI" id="CHEBI:82833"/>
        <dbReference type="ChEBI" id="CHEBI:194443"/>
        <dbReference type="EC" id="2.4.99.17"/>
    </reaction>
</comment>
<comment type="pathway">
    <text evidence="1">tRNA modification; tRNA-queuosine biosynthesis.</text>
</comment>
<comment type="subunit">
    <text evidence="1">Monomer.</text>
</comment>
<comment type="subcellular location">
    <subcellularLocation>
        <location evidence="1">Cytoplasm</location>
    </subcellularLocation>
</comment>
<comment type="similarity">
    <text evidence="1">Belongs to the QueA family.</text>
</comment>
<evidence type="ECO:0000255" key="1">
    <source>
        <dbReference type="HAMAP-Rule" id="MF_00113"/>
    </source>
</evidence>